<comment type="function">
    <text evidence="1">Component of the dark-operative protochlorophyllide reductase (DPOR) that uses Mg-ATP and reduced ferredoxin to reduce ring D of protochlorophyllide (Pchlide) to form chlorophyllide a (Chlide). This reaction is light-independent. The NB-protein (BchN-BchB) is the catalytic component of the complex (By similarity).</text>
</comment>
<comment type="catalytic activity">
    <reaction>
        <text>chlorophyllide a + oxidized 2[4Fe-4S]-[ferredoxin] + 2 ADP + 2 phosphate = protochlorophyllide a + reduced 2[4Fe-4S]-[ferredoxin] + 2 ATP + 2 H2O</text>
        <dbReference type="Rhea" id="RHEA:28202"/>
        <dbReference type="Rhea" id="RHEA-COMP:10002"/>
        <dbReference type="Rhea" id="RHEA-COMP:10004"/>
        <dbReference type="ChEBI" id="CHEBI:15377"/>
        <dbReference type="ChEBI" id="CHEBI:30616"/>
        <dbReference type="ChEBI" id="CHEBI:33722"/>
        <dbReference type="ChEBI" id="CHEBI:33723"/>
        <dbReference type="ChEBI" id="CHEBI:43474"/>
        <dbReference type="ChEBI" id="CHEBI:83348"/>
        <dbReference type="ChEBI" id="CHEBI:83350"/>
        <dbReference type="ChEBI" id="CHEBI:456216"/>
        <dbReference type="EC" id="1.3.7.7"/>
    </reaction>
</comment>
<comment type="cofactor">
    <cofactor evidence="1">
        <name>[4Fe-4S] cluster</name>
        <dbReference type="ChEBI" id="CHEBI:49883"/>
    </cofactor>
    <text evidence="1">Binds 1 [4Fe-4S] cluster per heterodimer. The cluster is bound at the heterodimer interface by residues from both subunits.</text>
</comment>
<comment type="pathway">
    <text>Porphyrin-containing compound metabolism; bacteriochlorophyll biosynthesis (light-independent).</text>
</comment>
<comment type="subunit">
    <text evidence="1">Protochlorophyllide reductase is composed of three subunits; BchL, BchN and BchB. Forms a heterotetramer of two BchB and two BchN subunits (By similarity).</text>
</comment>
<comment type="similarity">
    <text evidence="2">Belongs to the ChlB/BchB/BchZ family.</text>
</comment>
<reference key="1">
    <citation type="journal article" date="2008" name="J. Bacteriol.">
        <title>The genome of Heliobacterium modesticaldum, a phototrophic representative of the Firmicutes containing the simplest photosynthetic apparatus.</title>
        <authorList>
            <person name="Sattley W.M."/>
            <person name="Madigan M.T."/>
            <person name="Swingley W.D."/>
            <person name="Cheung P.C."/>
            <person name="Clocksin K.M."/>
            <person name="Conrad A.L."/>
            <person name="Dejesa L.C."/>
            <person name="Honchak B.M."/>
            <person name="Jung D.O."/>
            <person name="Karbach L.E."/>
            <person name="Kurdoglu A."/>
            <person name="Lahiri S."/>
            <person name="Mastrian S.D."/>
            <person name="Page L.E."/>
            <person name="Taylor H.L."/>
            <person name="Wang Z.T."/>
            <person name="Raymond J."/>
            <person name="Chen M."/>
            <person name="Blankenship R.E."/>
            <person name="Touchman J.W."/>
        </authorList>
    </citation>
    <scope>NUCLEOTIDE SEQUENCE [LARGE SCALE GENOMIC DNA]</scope>
    <source>
        <strain>ATCC 51547 / Ice1</strain>
    </source>
</reference>
<accession>B0TBM8</accession>
<gene>
    <name type="primary">bchB</name>
    <name type="ordered locus">Helmi_12420</name>
    <name type="ORF">HM1_0685</name>
</gene>
<dbReference type="EC" id="1.3.7.7"/>
<dbReference type="EMBL" id="CP000930">
    <property type="protein sequence ID" value="ABZ83867.1"/>
    <property type="molecule type" value="Genomic_DNA"/>
</dbReference>
<dbReference type="SMR" id="B0TBM8"/>
<dbReference type="STRING" id="498761.HM1_0685"/>
<dbReference type="KEGG" id="hmo:HM1_0685"/>
<dbReference type="eggNOG" id="COG2710">
    <property type="taxonomic scope" value="Bacteria"/>
</dbReference>
<dbReference type="HOGENOM" id="CLU_025470_0_0_9"/>
<dbReference type="UniPathway" id="UPA00671"/>
<dbReference type="Proteomes" id="UP000008550">
    <property type="component" value="Chromosome"/>
</dbReference>
<dbReference type="GO" id="GO:0051539">
    <property type="term" value="F:4 iron, 4 sulfur cluster binding"/>
    <property type="evidence" value="ECO:0007669"/>
    <property type="project" value="UniProtKB-KW"/>
</dbReference>
<dbReference type="GO" id="GO:0005524">
    <property type="term" value="F:ATP binding"/>
    <property type="evidence" value="ECO:0007669"/>
    <property type="project" value="UniProtKB-KW"/>
</dbReference>
<dbReference type="GO" id="GO:0046872">
    <property type="term" value="F:metal ion binding"/>
    <property type="evidence" value="ECO:0007669"/>
    <property type="project" value="UniProtKB-KW"/>
</dbReference>
<dbReference type="GO" id="GO:0016730">
    <property type="term" value="F:oxidoreductase activity, acting on iron-sulfur proteins as donors"/>
    <property type="evidence" value="ECO:0007669"/>
    <property type="project" value="InterPro"/>
</dbReference>
<dbReference type="GO" id="GO:0036070">
    <property type="term" value="P:light-independent bacteriochlorophyll biosynthetic process"/>
    <property type="evidence" value="ECO:0007669"/>
    <property type="project" value="UniProtKB-UniPathway"/>
</dbReference>
<dbReference type="GO" id="GO:0019685">
    <property type="term" value="P:photosynthesis, dark reaction"/>
    <property type="evidence" value="ECO:0007669"/>
    <property type="project" value="InterPro"/>
</dbReference>
<dbReference type="Gene3D" id="1.20.89.20">
    <property type="match status" value="1"/>
</dbReference>
<dbReference type="Gene3D" id="3.40.50.1980">
    <property type="entry name" value="Nitrogenase molybdenum iron protein domain"/>
    <property type="match status" value="3"/>
</dbReference>
<dbReference type="Gene3D" id="1.10.8.550">
    <property type="entry name" value="Proto-chlorophyllide reductase 57 kD subunit B"/>
    <property type="match status" value="1"/>
</dbReference>
<dbReference type="InterPro" id="IPR050152">
    <property type="entry name" value="ChlB/BchB/BchZ"/>
</dbReference>
<dbReference type="InterPro" id="IPR013580">
    <property type="entry name" value="LI-POR_suB-like_C"/>
</dbReference>
<dbReference type="InterPro" id="IPR000510">
    <property type="entry name" value="Nase/OxRdtase_comp1"/>
</dbReference>
<dbReference type="InterPro" id="IPR042298">
    <property type="entry name" value="P-CP_red_C"/>
</dbReference>
<dbReference type="InterPro" id="IPR005969">
    <property type="entry name" value="Protochl_reductB"/>
</dbReference>
<dbReference type="InterPro" id="IPR016209">
    <property type="entry name" value="Protochlorophyllide_Rdtase"/>
</dbReference>
<dbReference type="NCBIfam" id="TIGR01278">
    <property type="entry name" value="DPOR_BchB"/>
    <property type="match status" value="1"/>
</dbReference>
<dbReference type="NCBIfam" id="NF002789">
    <property type="entry name" value="PRK02910.1-3"/>
    <property type="match status" value="1"/>
</dbReference>
<dbReference type="PANTHER" id="PTHR33712">
    <property type="entry name" value="LIGHT-INDEPENDENT PROTOCHLOROPHYLLIDE REDUCTASE SUBUNIT B"/>
    <property type="match status" value="1"/>
</dbReference>
<dbReference type="PANTHER" id="PTHR33712:SF7">
    <property type="entry name" value="LIGHT-INDEPENDENT PROTOCHLOROPHYLLIDE REDUCTASE SUBUNIT B"/>
    <property type="match status" value="1"/>
</dbReference>
<dbReference type="Pfam" id="PF00148">
    <property type="entry name" value="Oxidored_nitro"/>
    <property type="match status" value="1"/>
</dbReference>
<dbReference type="Pfam" id="PF08369">
    <property type="entry name" value="PCP_red"/>
    <property type="match status" value="1"/>
</dbReference>
<dbReference type="PIRSF" id="PIRSF000163">
    <property type="entry name" value="PCP_ChlB"/>
    <property type="match status" value="1"/>
</dbReference>
<dbReference type="SUPFAM" id="SSF53807">
    <property type="entry name" value="Helical backbone' metal receptor"/>
    <property type="match status" value="1"/>
</dbReference>
<protein>
    <recommendedName>
        <fullName>Light-independent protochlorophyllide reductase subunit B</fullName>
        <shortName>DPOR subunit B</shortName>
        <shortName>LI-POR subunit B</shortName>
        <ecNumber>1.3.7.7</ecNumber>
    </recommendedName>
</protein>
<keyword id="KW-0004">4Fe-4S</keyword>
<keyword id="KW-0067">ATP-binding</keyword>
<keyword id="KW-0077">Bacteriochlorophyll biosynthesis</keyword>
<keyword id="KW-0149">Chlorophyll biosynthesis</keyword>
<keyword id="KW-0408">Iron</keyword>
<keyword id="KW-0411">Iron-sulfur</keyword>
<keyword id="KW-0479">Metal-binding</keyword>
<keyword id="KW-0547">Nucleotide-binding</keyword>
<keyword id="KW-0560">Oxidoreductase</keyword>
<keyword id="KW-0602">Photosynthesis</keyword>
<keyword id="KW-1185">Reference proteome</keyword>
<name>BCHB_HELMI</name>
<organism>
    <name type="scientific">Heliobacterium modesticaldum (strain ATCC 51547 / Ice1)</name>
    <dbReference type="NCBI Taxonomy" id="498761"/>
    <lineage>
        <taxon>Bacteria</taxon>
        <taxon>Bacillati</taxon>
        <taxon>Bacillota</taxon>
        <taxon>Clostridia</taxon>
        <taxon>Eubacteriales</taxon>
        <taxon>Heliobacteriaceae</taxon>
        <taxon>Heliomicrobium</taxon>
    </lineage>
</organism>
<proteinExistence type="inferred from homology"/>
<sequence>MKLAYWMYEGTALSGIARVAGSMPKVHTVIHGPQGDGYINVMFSMLERFHKLPPFTLSPIGRREMARGSRARLVETVRRVDALHQPDVIVITPTCSSTLLQEDLLAVANSLGRQTKARLIVPQVNAFRDLEHFAMDDFLAQMVAAFAVEQPKTERFTVNLIGPSYLGFHQIHDLNEIRTMLEEIGIGVNAVIPYGATVETLRSLTRAHLNICLYREYGRETCEYLRKRFGIDYISITPMGIRQTGRFLRALGEQAGIDVTPYIRRHLAPSGALARFTKSVDALSSLFGKRAVVFGDFSHAVGATYLLREIGLQVVWAGTYMTAWKDEFTEAVAALTDEAFVCDDFQAVSRKIRDTQPDIVFGTQMERHSAARYELPCIVISSPAHILNFPLFPAPVLGYRGMTRLLDTINQTIKLGLEEHLVNMFGEDTASERQMEAASAAARGTATAPTGAAGAVATVDELQWDAEAEKALKQVPFFVRGKVQRNTENYARERGYSEVTLDVIYAAKAYFEGKGNQGNR</sequence>
<feature type="chain" id="PRO_1000133423" description="Light-independent protochlorophyllide reductase subunit B">
    <location>
        <begin position="1"/>
        <end position="520"/>
    </location>
</feature>
<feature type="active site" description="Proton donor" evidence="1">
    <location>
        <position position="281"/>
    </location>
</feature>
<feature type="binding site" evidence="1">
    <location>
        <position position="36"/>
    </location>
    <ligand>
        <name>[4Fe-4S] cluster</name>
        <dbReference type="ChEBI" id="CHEBI:49883"/>
        <note>ligand shared with heterodimeric partner</note>
    </ligand>
</feature>
<feature type="binding site" evidence="1">
    <location>
        <begin position="416"/>
        <end position="417"/>
    </location>
    <ligand>
        <name>substrate</name>
    </ligand>
</feature>
<evidence type="ECO:0000250" key="1"/>
<evidence type="ECO:0000305" key="2"/>